<dbReference type="EC" id="3.1.3.18" evidence="1"/>
<dbReference type="EMBL" id="CP000026">
    <property type="protein sequence ID" value="AAV79161.1"/>
    <property type="molecule type" value="Genomic_DNA"/>
</dbReference>
<dbReference type="SMR" id="Q5PLX6"/>
<dbReference type="KEGG" id="spt:SPA3347"/>
<dbReference type="HOGENOM" id="CLU_045011_19_1_6"/>
<dbReference type="UniPathway" id="UPA00865">
    <property type="reaction ID" value="UER00834"/>
</dbReference>
<dbReference type="Proteomes" id="UP000008185">
    <property type="component" value="Chromosome"/>
</dbReference>
<dbReference type="GO" id="GO:0005829">
    <property type="term" value="C:cytosol"/>
    <property type="evidence" value="ECO:0007669"/>
    <property type="project" value="TreeGrafter"/>
</dbReference>
<dbReference type="GO" id="GO:0046872">
    <property type="term" value="F:metal ion binding"/>
    <property type="evidence" value="ECO:0007669"/>
    <property type="project" value="UniProtKB-KW"/>
</dbReference>
<dbReference type="GO" id="GO:0008967">
    <property type="term" value="F:phosphoglycolate phosphatase activity"/>
    <property type="evidence" value="ECO:0007669"/>
    <property type="project" value="UniProtKB-UniRule"/>
</dbReference>
<dbReference type="GO" id="GO:0005975">
    <property type="term" value="P:carbohydrate metabolic process"/>
    <property type="evidence" value="ECO:0007669"/>
    <property type="project" value="InterPro"/>
</dbReference>
<dbReference type="GO" id="GO:0006281">
    <property type="term" value="P:DNA repair"/>
    <property type="evidence" value="ECO:0007669"/>
    <property type="project" value="TreeGrafter"/>
</dbReference>
<dbReference type="GO" id="GO:0046295">
    <property type="term" value="P:glycolate biosynthetic process"/>
    <property type="evidence" value="ECO:0007669"/>
    <property type="project" value="UniProtKB-UniRule"/>
</dbReference>
<dbReference type="CDD" id="cd16417">
    <property type="entry name" value="HAD_PGPase"/>
    <property type="match status" value="1"/>
</dbReference>
<dbReference type="FunFam" id="1.10.150.240:FF:000003">
    <property type="entry name" value="Phosphoglycolate phosphatase"/>
    <property type="match status" value="1"/>
</dbReference>
<dbReference type="FunFam" id="3.40.50.1000:FF:000022">
    <property type="entry name" value="Phosphoglycolate phosphatase"/>
    <property type="match status" value="1"/>
</dbReference>
<dbReference type="Gene3D" id="3.40.50.1000">
    <property type="entry name" value="HAD superfamily/HAD-like"/>
    <property type="match status" value="1"/>
</dbReference>
<dbReference type="Gene3D" id="1.10.150.240">
    <property type="entry name" value="Putative phosphatase, domain 2"/>
    <property type="match status" value="1"/>
</dbReference>
<dbReference type="HAMAP" id="MF_00495">
    <property type="entry name" value="GPH_hydrolase_bact"/>
    <property type="match status" value="1"/>
</dbReference>
<dbReference type="InterPro" id="IPR050155">
    <property type="entry name" value="HAD-like_hydrolase_sf"/>
</dbReference>
<dbReference type="InterPro" id="IPR036412">
    <property type="entry name" value="HAD-like_sf"/>
</dbReference>
<dbReference type="InterPro" id="IPR006439">
    <property type="entry name" value="HAD-SF_hydro_IA"/>
</dbReference>
<dbReference type="InterPro" id="IPR041492">
    <property type="entry name" value="HAD_2"/>
</dbReference>
<dbReference type="InterPro" id="IPR023214">
    <property type="entry name" value="HAD_sf"/>
</dbReference>
<dbReference type="InterPro" id="IPR023198">
    <property type="entry name" value="PGP-like_dom2"/>
</dbReference>
<dbReference type="InterPro" id="IPR037512">
    <property type="entry name" value="PGPase_prok"/>
</dbReference>
<dbReference type="NCBIfam" id="TIGR01549">
    <property type="entry name" value="HAD-SF-IA-v1"/>
    <property type="match status" value="1"/>
</dbReference>
<dbReference type="NCBIfam" id="TIGR01509">
    <property type="entry name" value="HAD-SF-IA-v3"/>
    <property type="match status" value="1"/>
</dbReference>
<dbReference type="NCBIfam" id="TIGR01449">
    <property type="entry name" value="PGP_bact"/>
    <property type="match status" value="1"/>
</dbReference>
<dbReference type="NCBIfam" id="NF009694">
    <property type="entry name" value="PRK13222.1-1"/>
    <property type="match status" value="1"/>
</dbReference>
<dbReference type="NCBIfam" id="NF009695">
    <property type="entry name" value="PRK13222.1-2"/>
    <property type="match status" value="1"/>
</dbReference>
<dbReference type="NCBIfam" id="NF009697">
    <property type="entry name" value="PRK13222.1-4"/>
    <property type="match status" value="1"/>
</dbReference>
<dbReference type="PANTHER" id="PTHR43434">
    <property type="entry name" value="PHOSPHOGLYCOLATE PHOSPHATASE"/>
    <property type="match status" value="1"/>
</dbReference>
<dbReference type="PANTHER" id="PTHR43434:SF1">
    <property type="entry name" value="PHOSPHOGLYCOLATE PHOSPHATASE"/>
    <property type="match status" value="1"/>
</dbReference>
<dbReference type="Pfam" id="PF13419">
    <property type="entry name" value="HAD_2"/>
    <property type="match status" value="1"/>
</dbReference>
<dbReference type="PRINTS" id="PR00413">
    <property type="entry name" value="HADHALOGNASE"/>
</dbReference>
<dbReference type="SFLD" id="SFLDG01135">
    <property type="entry name" value="C1.5.6:_HAD__Beta-PGM__Phospha"/>
    <property type="match status" value="1"/>
</dbReference>
<dbReference type="SFLD" id="SFLDS00003">
    <property type="entry name" value="Haloacid_Dehalogenase"/>
    <property type="match status" value="1"/>
</dbReference>
<dbReference type="SUPFAM" id="SSF56784">
    <property type="entry name" value="HAD-like"/>
    <property type="match status" value="1"/>
</dbReference>
<gene>
    <name type="ordered locus">SPA3347</name>
</gene>
<keyword id="KW-0119">Carbohydrate metabolism</keyword>
<keyword id="KW-0868">Chloride</keyword>
<keyword id="KW-0378">Hydrolase</keyword>
<keyword id="KW-0460">Magnesium</keyword>
<keyword id="KW-0479">Metal-binding</keyword>
<protein>
    <recommendedName>
        <fullName evidence="1">Phosphoglycolate phosphatase</fullName>
        <shortName evidence="1">PGP</shortName>
        <shortName evidence="1">PGPase</shortName>
        <ecNumber evidence="1">3.1.3.18</ecNumber>
    </recommendedName>
</protein>
<organism>
    <name type="scientific">Salmonella paratyphi A (strain ATCC 9150 / SARB42)</name>
    <dbReference type="NCBI Taxonomy" id="295319"/>
    <lineage>
        <taxon>Bacteria</taxon>
        <taxon>Pseudomonadati</taxon>
        <taxon>Pseudomonadota</taxon>
        <taxon>Gammaproteobacteria</taxon>
        <taxon>Enterobacterales</taxon>
        <taxon>Enterobacteriaceae</taxon>
        <taxon>Salmonella</taxon>
    </lineage>
</organism>
<sequence>MNKLQNIRGVAFDLDGTLVDSAPGLAAAVDMALYALELPVAGEERVITWIGNGADVLMERALTWARQERATLRKTMGKPPVDEDIPAEEQVRILRKLFDRYYGEVAEEGTFLFPHVADTLGALHASGLSLGLVTNKPTPFVAPLLESLDIAKYFSVVIGGDDVQNKKPHPEPLLLVASRLGMTPEQMLFVGDSRNDIQAAKAAGCPSVGLTYGYNYGEAIALSEPDVIYDSFNDLLPALGLPHSDNQEIKND</sequence>
<evidence type="ECO:0000255" key="1">
    <source>
        <dbReference type="HAMAP-Rule" id="MF_00495"/>
    </source>
</evidence>
<proteinExistence type="inferred from homology"/>
<feature type="chain" id="PRO_0000238176" description="Phosphoglycolate phosphatase">
    <location>
        <begin position="1"/>
        <end position="252"/>
    </location>
</feature>
<feature type="active site" description="Nucleophile" evidence="1">
    <location>
        <position position="13"/>
    </location>
</feature>
<feature type="binding site" evidence="1">
    <location>
        <position position="13"/>
    </location>
    <ligand>
        <name>Mg(2+)</name>
        <dbReference type="ChEBI" id="CHEBI:18420"/>
    </ligand>
</feature>
<feature type="binding site" evidence="1">
    <location>
        <position position="15"/>
    </location>
    <ligand>
        <name>Mg(2+)</name>
        <dbReference type="ChEBI" id="CHEBI:18420"/>
    </ligand>
</feature>
<feature type="binding site" evidence="1">
    <location>
        <position position="192"/>
    </location>
    <ligand>
        <name>Mg(2+)</name>
        <dbReference type="ChEBI" id="CHEBI:18420"/>
    </ligand>
</feature>
<name>GPH_SALPA</name>
<reference key="1">
    <citation type="journal article" date="2004" name="Nat. Genet.">
        <title>Comparison of genome degradation in Paratyphi A and Typhi, human-restricted serovars of Salmonella enterica that cause typhoid.</title>
        <authorList>
            <person name="McClelland M."/>
            <person name="Sanderson K.E."/>
            <person name="Clifton S.W."/>
            <person name="Latreille P."/>
            <person name="Porwollik S."/>
            <person name="Sabo A."/>
            <person name="Meyer R."/>
            <person name="Bieri T."/>
            <person name="Ozersky P."/>
            <person name="McLellan M."/>
            <person name="Harkins C.R."/>
            <person name="Wang C."/>
            <person name="Nguyen C."/>
            <person name="Berghoff A."/>
            <person name="Elliott G."/>
            <person name="Kohlberg S."/>
            <person name="Strong C."/>
            <person name="Du F."/>
            <person name="Carter J."/>
            <person name="Kremizki C."/>
            <person name="Layman D."/>
            <person name="Leonard S."/>
            <person name="Sun H."/>
            <person name="Fulton L."/>
            <person name="Nash W."/>
            <person name="Miner T."/>
            <person name="Minx P."/>
            <person name="Delehaunty K."/>
            <person name="Fronick C."/>
            <person name="Magrini V."/>
            <person name="Nhan M."/>
            <person name="Warren W."/>
            <person name="Florea L."/>
            <person name="Spieth J."/>
            <person name="Wilson R.K."/>
        </authorList>
    </citation>
    <scope>NUCLEOTIDE SEQUENCE [LARGE SCALE GENOMIC DNA]</scope>
    <source>
        <strain>ATCC 9150 / SARB42</strain>
    </source>
</reference>
<comment type="function">
    <text evidence="1">Specifically catalyzes the dephosphorylation of 2-phosphoglycolate. Is involved in the dissimilation of the intracellular 2-phosphoglycolate formed during the DNA repair of 3'-phosphoglycolate ends, a major class of DNA lesions induced by oxidative stress.</text>
</comment>
<comment type="catalytic activity">
    <reaction evidence="1">
        <text>2-phosphoglycolate + H2O = glycolate + phosphate</text>
        <dbReference type="Rhea" id="RHEA:14369"/>
        <dbReference type="ChEBI" id="CHEBI:15377"/>
        <dbReference type="ChEBI" id="CHEBI:29805"/>
        <dbReference type="ChEBI" id="CHEBI:43474"/>
        <dbReference type="ChEBI" id="CHEBI:58033"/>
        <dbReference type="EC" id="3.1.3.18"/>
    </reaction>
</comment>
<comment type="cofactor">
    <cofactor evidence="1">
        <name>Mg(2+)</name>
        <dbReference type="ChEBI" id="CHEBI:18420"/>
    </cofactor>
</comment>
<comment type="cofactor">
    <cofactor evidence="1">
        <name>chloride</name>
        <dbReference type="ChEBI" id="CHEBI:17996"/>
    </cofactor>
</comment>
<comment type="pathway">
    <text evidence="1">Organic acid metabolism; glycolate biosynthesis; glycolate from 2-phosphoglycolate: step 1/1.</text>
</comment>
<comment type="subunit">
    <text evidence="1">Monomer.</text>
</comment>
<comment type="similarity">
    <text evidence="1">Belongs to the HAD-like hydrolase superfamily. CbbY/CbbZ/Gph/YieH family.</text>
</comment>
<accession>Q5PLX6</accession>